<protein>
    <recommendedName>
        <fullName evidence="1">UPF0283 membrane protein Smed_1530</fullName>
    </recommendedName>
</protein>
<feature type="chain" id="PRO_1000064854" description="UPF0283 membrane protein Smed_1530">
    <location>
        <begin position="1"/>
        <end position="361"/>
    </location>
</feature>
<feature type="transmembrane region" description="Helical" evidence="1">
    <location>
        <begin position="76"/>
        <end position="96"/>
    </location>
</feature>
<feature type="transmembrane region" description="Helical" evidence="1">
    <location>
        <begin position="109"/>
        <end position="129"/>
    </location>
</feature>
<feature type="region of interest" description="Disordered" evidence="2">
    <location>
        <begin position="1"/>
        <end position="40"/>
    </location>
</feature>
<feature type="compositionally biased region" description="Basic and acidic residues" evidence="2">
    <location>
        <begin position="22"/>
        <end position="31"/>
    </location>
</feature>
<accession>A6U9P2</accession>
<name>Y1530_SINMW</name>
<evidence type="ECO:0000255" key="1">
    <source>
        <dbReference type="HAMAP-Rule" id="MF_01085"/>
    </source>
</evidence>
<evidence type="ECO:0000256" key="2">
    <source>
        <dbReference type="SAM" id="MobiDB-lite"/>
    </source>
</evidence>
<gene>
    <name type="ordered locus">Smed_1530</name>
</gene>
<dbReference type="EMBL" id="CP000738">
    <property type="protein sequence ID" value="ABR60372.1"/>
    <property type="molecule type" value="Genomic_DNA"/>
</dbReference>
<dbReference type="RefSeq" id="WP_011975680.1">
    <property type="nucleotide sequence ID" value="NC_009636.1"/>
</dbReference>
<dbReference type="RefSeq" id="YP_001327207.1">
    <property type="nucleotide sequence ID" value="NC_009636.1"/>
</dbReference>
<dbReference type="STRING" id="366394.Smed_1530"/>
<dbReference type="KEGG" id="smd:Smed_1530"/>
<dbReference type="PATRIC" id="fig|366394.8.peg.4664"/>
<dbReference type="eggNOG" id="COG3768">
    <property type="taxonomic scope" value="Bacteria"/>
</dbReference>
<dbReference type="HOGENOM" id="CLU_057693_1_0_5"/>
<dbReference type="OrthoDB" id="9816060at2"/>
<dbReference type="Proteomes" id="UP000001108">
    <property type="component" value="Chromosome"/>
</dbReference>
<dbReference type="GO" id="GO:0005886">
    <property type="term" value="C:plasma membrane"/>
    <property type="evidence" value="ECO:0007669"/>
    <property type="project" value="UniProtKB-SubCell"/>
</dbReference>
<dbReference type="HAMAP" id="MF_01085">
    <property type="entry name" value="UPF0283"/>
    <property type="match status" value="1"/>
</dbReference>
<dbReference type="InterPro" id="IPR021147">
    <property type="entry name" value="DUF697"/>
</dbReference>
<dbReference type="InterPro" id="IPR006507">
    <property type="entry name" value="UPF0283"/>
</dbReference>
<dbReference type="NCBIfam" id="TIGR01620">
    <property type="entry name" value="hyp_HI0043"/>
    <property type="match status" value="1"/>
</dbReference>
<dbReference type="PANTHER" id="PTHR39342">
    <property type="entry name" value="UPF0283 MEMBRANE PROTEIN YCJF"/>
    <property type="match status" value="1"/>
</dbReference>
<dbReference type="PANTHER" id="PTHR39342:SF1">
    <property type="entry name" value="UPF0283 MEMBRANE PROTEIN YCJF"/>
    <property type="match status" value="1"/>
</dbReference>
<dbReference type="Pfam" id="PF05128">
    <property type="entry name" value="DUF697"/>
    <property type="match status" value="1"/>
</dbReference>
<keyword id="KW-0997">Cell inner membrane</keyword>
<keyword id="KW-1003">Cell membrane</keyword>
<keyword id="KW-0472">Membrane</keyword>
<keyword id="KW-0812">Transmembrane</keyword>
<keyword id="KW-1133">Transmembrane helix</keyword>
<comment type="subcellular location">
    <subcellularLocation>
        <location evidence="1">Cell inner membrane</location>
        <topology evidence="1">Multi-pass membrane protein</topology>
    </subcellularLocation>
</comment>
<comment type="similarity">
    <text evidence="1">Belongs to the UPF0283 family.</text>
</comment>
<proteinExistence type="inferred from homology"/>
<reference key="1">
    <citation type="submission" date="2007-06" db="EMBL/GenBank/DDBJ databases">
        <title>Complete sequence of Sinorhizobium medicae WSM419 chromosome.</title>
        <authorList>
            <consortium name="US DOE Joint Genome Institute"/>
            <person name="Copeland A."/>
            <person name="Lucas S."/>
            <person name="Lapidus A."/>
            <person name="Barry K."/>
            <person name="Glavina del Rio T."/>
            <person name="Dalin E."/>
            <person name="Tice H."/>
            <person name="Pitluck S."/>
            <person name="Chain P."/>
            <person name="Malfatti S."/>
            <person name="Shin M."/>
            <person name="Vergez L."/>
            <person name="Schmutz J."/>
            <person name="Larimer F."/>
            <person name="Land M."/>
            <person name="Hauser L."/>
            <person name="Kyrpides N."/>
            <person name="Mikhailova N."/>
            <person name="Reeve W.G."/>
            <person name="Richardson P."/>
        </authorList>
    </citation>
    <scope>NUCLEOTIDE SEQUENCE [LARGE SCALE GENOMIC DNA]</scope>
    <source>
        <strain>WSM419</strain>
    </source>
</reference>
<organism>
    <name type="scientific">Sinorhizobium medicae (strain WSM419)</name>
    <name type="common">Ensifer medicae</name>
    <dbReference type="NCBI Taxonomy" id="366394"/>
    <lineage>
        <taxon>Bacteria</taxon>
        <taxon>Pseudomonadati</taxon>
        <taxon>Pseudomonadota</taxon>
        <taxon>Alphaproteobacteria</taxon>
        <taxon>Hyphomicrobiales</taxon>
        <taxon>Rhizobiaceae</taxon>
        <taxon>Sinorhizobium/Ensifer group</taxon>
        <taxon>Sinorhizobium</taxon>
    </lineage>
</organism>
<sequence length="361" mass="38158">MNDDSNGRRRRPAAFPVGTEDATSRELEQTPRRAPGSFSDKIVMTPDADDPFIETTAAIEALNPPEARPPRRRLSFGKIAAGAFGILISLAVGLWVDRLVRDLFSRADWLGYGAVAVVAIGAAAFLIVVAREIFGMMQLTAVQALKADLAAAAVAGKAQAARAATARLVHLLAGNPRTAKGRARLADTEGEIIDAPHLVDLTERELLAPLDREARRIILGAAKRVSIVTAVSPRALVDLGYVLYESARMIRAMAELYGGRPGTLGLLRLMRDVVAHLAVTGSIAVGDSLVQQILGHGLASKLSARLGEGVINGLMTARIGIAAMDLCRPMPFRALKRPSIGDFLADLAPGAGRTESATGKA</sequence>